<accession>O14322</accession>
<name>MU100_SCHPO</name>
<protein>
    <recommendedName>
        <fullName>Meiotically up-regulated gene 100 protein, mitochondrial</fullName>
    </recommendedName>
</protein>
<comment type="function">
    <text evidence="2">Has a role in meiosis.</text>
</comment>
<comment type="subcellular location">
    <subcellularLocation>
        <location evidence="3">Mitochondrion inner membrane</location>
        <topology evidence="3">Multi-pass membrane protein</topology>
    </subcellularLocation>
</comment>
<dbReference type="EMBL" id="CU329671">
    <property type="protein sequence ID" value="CAB16899.1"/>
    <property type="molecule type" value="Genomic_DNA"/>
</dbReference>
<dbReference type="PIR" id="T39581">
    <property type="entry name" value="T39581"/>
</dbReference>
<dbReference type="RefSeq" id="NP_595789.1">
    <property type="nucleotide sequence ID" value="NM_001021690.2"/>
</dbReference>
<dbReference type="SMR" id="O14322"/>
<dbReference type="BioGRID" id="276684">
    <property type="interactions" value="2"/>
</dbReference>
<dbReference type="STRING" id="284812.O14322"/>
<dbReference type="SwissPalm" id="O14322"/>
<dbReference type="PaxDb" id="4896-SPBC16E9.07.1"/>
<dbReference type="EnsemblFungi" id="SPBC16E9.07.1">
    <property type="protein sequence ID" value="SPBC16E9.07.1:pep"/>
    <property type="gene ID" value="SPBC16E9.07"/>
</dbReference>
<dbReference type="GeneID" id="2540147"/>
<dbReference type="KEGG" id="spo:2540147"/>
<dbReference type="PomBase" id="SPBC16E9.07">
    <property type="gene designation" value="mug100"/>
</dbReference>
<dbReference type="VEuPathDB" id="FungiDB:SPBC16E9.07"/>
<dbReference type="HOGENOM" id="CLU_888912_0_0_1"/>
<dbReference type="InParanoid" id="O14322"/>
<dbReference type="PRO" id="PR:O14322"/>
<dbReference type="Proteomes" id="UP000002485">
    <property type="component" value="Chromosome II"/>
</dbReference>
<dbReference type="GO" id="GO:0005743">
    <property type="term" value="C:mitochondrial inner membrane"/>
    <property type="evidence" value="ECO:0007669"/>
    <property type="project" value="UniProtKB-SubCell"/>
</dbReference>
<dbReference type="GO" id="GO:0005739">
    <property type="term" value="C:mitochondrion"/>
    <property type="evidence" value="ECO:0007005"/>
    <property type="project" value="PomBase"/>
</dbReference>
<dbReference type="GO" id="GO:0051321">
    <property type="term" value="P:meiotic cell cycle"/>
    <property type="evidence" value="ECO:0007669"/>
    <property type="project" value="UniProtKB-KW"/>
</dbReference>
<evidence type="ECO:0000255" key="1"/>
<evidence type="ECO:0000269" key="2">
    <source>
    </source>
</evidence>
<evidence type="ECO:0000269" key="3">
    <source>
    </source>
</evidence>
<sequence>MYTTKRFQQLLKEFEVALLLKFSKQLLLLGKIESYLNNGSSMKHEECKSQIYDCRMAVKIYVCSITANKSTNLKHFVRLFFLLGDSERVNLCIKRLIYTFIGSINSVIDKKEDIEQELYSSCMHCSIMSPKLQKVMLAQKSLILNKVFDYLFFLYGLSGTSILYTAGDHIRKLDFKDSGFITPFFQLLLLVLLFTLTFKSKHSLNAYSLTASQFSGHTVCNESSLKPNENSCDLNLSRTATIKLESAEDDACQRVLGLIKSYMRPRTLEELKLEFRFEHKSVQDITTCILDEVDGVQMARVLEINPDAPILAF</sequence>
<reference key="1">
    <citation type="journal article" date="2002" name="Nature">
        <title>The genome sequence of Schizosaccharomyces pombe.</title>
        <authorList>
            <person name="Wood V."/>
            <person name="Gwilliam R."/>
            <person name="Rajandream M.A."/>
            <person name="Lyne M.H."/>
            <person name="Lyne R."/>
            <person name="Stewart A."/>
            <person name="Sgouros J.G."/>
            <person name="Peat N."/>
            <person name="Hayles J."/>
            <person name="Baker S.G."/>
            <person name="Basham D."/>
            <person name="Bowman S."/>
            <person name="Brooks K."/>
            <person name="Brown D."/>
            <person name="Brown S."/>
            <person name="Chillingworth T."/>
            <person name="Churcher C.M."/>
            <person name="Collins M."/>
            <person name="Connor R."/>
            <person name="Cronin A."/>
            <person name="Davis P."/>
            <person name="Feltwell T."/>
            <person name="Fraser A."/>
            <person name="Gentles S."/>
            <person name="Goble A."/>
            <person name="Hamlin N."/>
            <person name="Harris D.E."/>
            <person name="Hidalgo J."/>
            <person name="Hodgson G."/>
            <person name="Holroyd S."/>
            <person name="Hornsby T."/>
            <person name="Howarth S."/>
            <person name="Huckle E.J."/>
            <person name="Hunt S."/>
            <person name="Jagels K."/>
            <person name="James K.D."/>
            <person name="Jones L."/>
            <person name="Jones M."/>
            <person name="Leather S."/>
            <person name="McDonald S."/>
            <person name="McLean J."/>
            <person name="Mooney P."/>
            <person name="Moule S."/>
            <person name="Mungall K.L."/>
            <person name="Murphy L.D."/>
            <person name="Niblett D."/>
            <person name="Odell C."/>
            <person name="Oliver K."/>
            <person name="O'Neil S."/>
            <person name="Pearson D."/>
            <person name="Quail M.A."/>
            <person name="Rabbinowitsch E."/>
            <person name="Rutherford K.M."/>
            <person name="Rutter S."/>
            <person name="Saunders D."/>
            <person name="Seeger K."/>
            <person name="Sharp S."/>
            <person name="Skelton J."/>
            <person name="Simmonds M.N."/>
            <person name="Squares R."/>
            <person name="Squares S."/>
            <person name="Stevens K."/>
            <person name="Taylor K."/>
            <person name="Taylor R.G."/>
            <person name="Tivey A."/>
            <person name="Walsh S.V."/>
            <person name="Warren T."/>
            <person name="Whitehead S."/>
            <person name="Woodward J.R."/>
            <person name="Volckaert G."/>
            <person name="Aert R."/>
            <person name="Robben J."/>
            <person name="Grymonprez B."/>
            <person name="Weltjens I."/>
            <person name="Vanstreels E."/>
            <person name="Rieger M."/>
            <person name="Schaefer M."/>
            <person name="Mueller-Auer S."/>
            <person name="Gabel C."/>
            <person name="Fuchs M."/>
            <person name="Duesterhoeft A."/>
            <person name="Fritzc C."/>
            <person name="Holzer E."/>
            <person name="Moestl D."/>
            <person name="Hilbert H."/>
            <person name="Borzym K."/>
            <person name="Langer I."/>
            <person name="Beck A."/>
            <person name="Lehrach H."/>
            <person name="Reinhardt R."/>
            <person name="Pohl T.M."/>
            <person name="Eger P."/>
            <person name="Zimmermann W."/>
            <person name="Wedler H."/>
            <person name="Wambutt R."/>
            <person name="Purnelle B."/>
            <person name="Goffeau A."/>
            <person name="Cadieu E."/>
            <person name="Dreano S."/>
            <person name="Gloux S."/>
            <person name="Lelaure V."/>
            <person name="Mottier S."/>
            <person name="Galibert F."/>
            <person name="Aves S.J."/>
            <person name="Xiang Z."/>
            <person name="Hunt C."/>
            <person name="Moore K."/>
            <person name="Hurst S.M."/>
            <person name="Lucas M."/>
            <person name="Rochet M."/>
            <person name="Gaillardin C."/>
            <person name="Tallada V.A."/>
            <person name="Garzon A."/>
            <person name="Thode G."/>
            <person name="Daga R.R."/>
            <person name="Cruzado L."/>
            <person name="Jimenez J."/>
            <person name="Sanchez M."/>
            <person name="del Rey F."/>
            <person name="Benito J."/>
            <person name="Dominguez A."/>
            <person name="Revuelta J.L."/>
            <person name="Moreno S."/>
            <person name="Armstrong J."/>
            <person name="Forsburg S.L."/>
            <person name="Cerutti L."/>
            <person name="Lowe T."/>
            <person name="McCombie W.R."/>
            <person name="Paulsen I."/>
            <person name="Potashkin J."/>
            <person name="Shpakovski G.V."/>
            <person name="Ussery D."/>
            <person name="Barrell B.G."/>
            <person name="Nurse P."/>
        </authorList>
    </citation>
    <scope>NUCLEOTIDE SEQUENCE [LARGE SCALE GENOMIC DNA]</scope>
    <source>
        <strain>972 / ATCC 24843</strain>
    </source>
</reference>
<reference key="2">
    <citation type="journal article" date="2005" name="Curr. Biol.">
        <title>A large-scale screen in S. pombe identifies seven novel genes required for critical meiotic events.</title>
        <authorList>
            <person name="Martin-Castellanos C."/>
            <person name="Blanco M."/>
            <person name="Rozalen A.E."/>
            <person name="Perez-Hidalgo L."/>
            <person name="Garcia A.I."/>
            <person name="Conde F."/>
            <person name="Mata J."/>
            <person name="Ellermeier C."/>
            <person name="Davis L."/>
            <person name="San-Segundo P."/>
            <person name="Smith G.R."/>
            <person name="Moreno S."/>
        </authorList>
    </citation>
    <scope>FUNCTION IN MEIOSIS</scope>
</reference>
<reference key="3">
    <citation type="journal article" date="2006" name="Nat. Biotechnol.">
        <title>ORFeome cloning and global analysis of protein localization in the fission yeast Schizosaccharomyces pombe.</title>
        <authorList>
            <person name="Matsuyama A."/>
            <person name="Arai R."/>
            <person name="Yashiroda Y."/>
            <person name="Shirai A."/>
            <person name="Kamata A."/>
            <person name="Sekido S."/>
            <person name="Kobayashi Y."/>
            <person name="Hashimoto A."/>
            <person name="Hamamoto M."/>
            <person name="Hiraoka Y."/>
            <person name="Horinouchi S."/>
            <person name="Yoshida M."/>
        </authorList>
    </citation>
    <scope>SUBCELLULAR LOCATION [LARGE SCALE ANALYSIS]</scope>
</reference>
<gene>
    <name type="primary">mug100</name>
    <name type="ORF">SPBC16E9.07</name>
</gene>
<feature type="transit peptide" description="Mitochondrion" evidence="1">
    <location>
        <begin position="1"/>
        <end status="unknown"/>
    </location>
</feature>
<feature type="chain" id="PRO_0000278619" description="Meiotically up-regulated gene 100 protein, mitochondrial">
    <location>
        <begin status="unknown"/>
        <end position="313"/>
    </location>
</feature>
<feature type="transmembrane region" description="Helical" evidence="1">
    <location>
        <begin position="147"/>
        <end position="167"/>
    </location>
</feature>
<feature type="transmembrane region" description="Helical" evidence="1">
    <location>
        <begin position="178"/>
        <end position="198"/>
    </location>
</feature>
<keyword id="KW-0469">Meiosis</keyword>
<keyword id="KW-0472">Membrane</keyword>
<keyword id="KW-0496">Mitochondrion</keyword>
<keyword id="KW-0999">Mitochondrion inner membrane</keyword>
<keyword id="KW-1185">Reference proteome</keyword>
<keyword id="KW-0809">Transit peptide</keyword>
<keyword id="KW-0812">Transmembrane</keyword>
<keyword id="KW-1133">Transmembrane helix</keyword>
<organism>
    <name type="scientific">Schizosaccharomyces pombe (strain 972 / ATCC 24843)</name>
    <name type="common">Fission yeast</name>
    <dbReference type="NCBI Taxonomy" id="284812"/>
    <lineage>
        <taxon>Eukaryota</taxon>
        <taxon>Fungi</taxon>
        <taxon>Dikarya</taxon>
        <taxon>Ascomycota</taxon>
        <taxon>Taphrinomycotina</taxon>
        <taxon>Schizosaccharomycetes</taxon>
        <taxon>Schizosaccharomycetales</taxon>
        <taxon>Schizosaccharomycetaceae</taxon>
        <taxon>Schizosaccharomyces</taxon>
    </lineage>
</organism>
<proteinExistence type="evidence at protein level"/>